<protein>
    <recommendedName>
        <fullName evidence="1">Segregation and condensation protein A</fullName>
    </recommendedName>
</protein>
<proteinExistence type="inferred from homology"/>
<comment type="function">
    <text evidence="1">Participates in chromosomal partition during cell division. May act via the formation of a condensin-like complex containing Smc and ScpB that pull DNA away from mid-cell into both cell halves.</text>
</comment>
<comment type="subunit">
    <text evidence="1">Component of a cohesin-like complex composed of ScpA, ScpB and the Smc homodimer, in which ScpA and ScpB bind to the head domain of Smc. The presence of the three proteins is required for the association of the complex with DNA.</text>
</comment>
<comment type="subcellular location">
    <subcellularLocation>
        <location evidence="1">Cytoplasm</location>
    </subcellularLocation>
    <text evidence="1">Associated with two foci at the outer edges of the nucleoid region in young cells, and at four foci within both cell halves in older cells.</text>
</comment>
<comment type="similarity">
    <text evidence="1">Belongs to the ScpA family.</text>
</comment>
<dbReference type="EMBL" id="AJ277490">
    <property type="protein sequence ID" value="CAC19444.1"/>
    <property type="molecule type" value="Genomic_DNA"/>
</dbReference>
<dbReference type="SMR" id="Q9EUR2"/>
<dbReference type="GO" id="GO:0005737">
    <property type="term" value="C:cytoplasm"/>
    <property type="evidence" value="ECO:0007669"/>
    <property type="project" value="UniProtKB-SubCell"/>
</dbReference>
<dbReference type="GO" id="GO:0051301">
    <property type="term" value="P:cell division"/>
    <property type="evidence" value="ECO:0007669"/>
    <property type="project" value="UniProtKB-KW"/>
</dbReference>
<dbReference type="GO" id="GO:0007059">
    <property type="term" value="P:chromosome segregation"/>
    <property type="evidence" value="ECO:0007669"/>
    <property type="project" value="UniProtKB-UniRule"/>
</dbReference>
<dbReference type="GO" id="GO:0006260">
    <property type="term" value="P:DNA replication"/>
    <property type="evidence" value="ECO:0007669"/>
    <property type="project" value="UniProtKB-UniRule"/>
</dbReference>
<dbReference type="Gene3D" id="6.10.250.2410">
    <property type="match status" value="1"/>
</dbReference>
<dbReference type="Gene3D" id="1.10.10.580">
    <property type="entry name" value="Structural maintenance of chromosome 1. Chain E"/>
    <property type="match status" value="1"/>
</dbReference>
<dbReference type="HAMAP" id="MF_01805">
    <property type="entry name" value="ScpA"/>
    <property type="match status" value="1"/>
</dbReference>
<dbReference type="InterPro" id="IPR003768">
    <property type="entry name" value="ScpA"/>
</dbReference>
<dbReference type="InterPro" id="IPR023093">
    <property type="entry name" value="ScpA-like_C"/>
</dbReference>
<dbReference type="NCBIfam" id="NF000993">
    <property type="entry name" value="PRK00104.1-2"/>
    <property type="match status" value="1"/>
</dbReference>
<dbReference type="PANTHER" id="PTHR33969">
    <property type="entry name" value="SEGREGATION AND CONDENSATION PROTEIN A"/>
    <property type="match status" value="1"/>
</dbReference>
<dbReference type="PANTHER" id="PTHR33969:SF2">
    <property type="entry name" value="SEGREGATION AND CONDENSATION PROTEIN A"/>
    <property type="match status" value="1"/>
</dbReference>
<dbReference type="Pfam" id="PF02616">
    <property type="entry name" value="SMC_ScpA"/>
    <property type="match status" value="1"/>
</dbReference>
<evidence type="ECO:0000255" key="1">
    <source>
        <dbReference type="HAMAP-Rule" id="MF_01805"/>
    </source>
</evidence>
<gene>
    <name evidence="1" type="primary">scpA</name>
</gene>
<sequence>MDIKLKDFEGPLDLLLHLVSKYKMDIYDVPITEVIEQYLAYVSTLQAMRLEVTGEYMVMASQLMLIKSRKLLPKVAEVTDLEDDLEQDLLSQIEEYRKFKLLGEHLEAKHQERAQYYSKAPRELMYEDAELVHDKTTIDLFLAFSNILAKKKEEFAQNHTTILRDEYKIEDMMIIVKESLTGRDQLRLQDLFKEAQNVQEVITLFLATLELIKTQELILVQEESFGDIYLMEKKEESQVAQS</sequence>
<reference key="1">
    <citation type="journal article" date="2002" name="J. Mol. Microbiol. Biotechnol.">
        <title>A XerD recombinase with unusual active site motifs in Streptococcus pneumoniae.</title>
        <authorList>
            <person name="Reichmann P."/>
            <person name="Hakenbeck R."/>
        </authorList>
    </citation>
    <scope>NUCLEOTIDE SEQUENCE [GENOMIC DNA]</scope>
    <source>
        <strain>476</strain>
    </source>
</reference>
<keyword id="KW-0131">Cell cycle</keyword>
<keyword id="KW-0132">Cell division</keyword>
<keyword id="KW-0159">Chromosome partition</keyword>
<keyword id="KW-0963">Cytoplasm</keyword>
<accession>Q9EUR2</accession>
<name>SCPA_STRMT</name>
<feature type="chain" id="PRO_0000211112" description="Segregation and condensation protein A">
    <location>
        <begin position="1"/>
        <end position="242"/>
    </location>
</feature>
<organism>
    <name type="scientific">Streptococcus mitis</name>
    <dbReference type="NCBI Taxonomy" id="28037"/>
    <lineage>
        <taxon>Bacteria</taxon>
        <taxon>Bacillati</taxon>
        <taxon>Bacillota</taxon>
        <taxon>Bacilli</taxon>
        <taxon>Lactobacillales</taxon>
        <taxon>Streptococcaceae</taxon>
        <taxon>Streptococcus</taxon>
        <taxon>Streptococcus mitis group</taxon>
    </lineage>
</organism>